<gene>
    <name evidence="1 18" type="primary">dnaT</name>
    <name type="ordered locus">b4362</name>
    <name type="ordered locus">JW4326</name>
</gene>
<evidence type="ECO:0000255" key="1">
    <source>
        <dbReference type="HAMAP-Rule" id="MF_01061"/>
    </source>
</evidence>
<evidence type="ECO:0000256" key="2">
    <source>
        <dbReference type="SAM" id="MobiDB-lite"/>
    </source>
</evidence>
<evidence type="ECO:0000269" key="3">
    <source>
    </source>
</evidence>
<evidence type="ECO:0000269" key="4">
    <source>
    </source>
</evidence>
<evidence type="ECO:0000269" key="5">
    <source>
    </source>
</evidence>
<evidence type="ECO:0000269" key="6">
    <source>
    </source>
</evidence>
<evidence type="ECO:0000269" key="7">
    <source>
    </source>
</evidence>
<evidence type="ECO:0000269" key="8">
    <source>
    </source>
</evidence>
<evidence type="ECO:0000269" key="9">
    <source>
    </source>
</evidence>
<evidence type="ECO:0000269" key="10">
    <source>
    </source>
</evidence>
<evidence type="ECO:0000269" key="11">
    <source>
    </source>
</evidence>
<evidence type="ECO:0000269" key="12">
    <source>
    </source>
</evidence>
<evidence type="ECO:0000269" key="13">
    <source>
    </source>
</evidence>
<evidence type="ECO:0000269" key="14">
    <source>
    </source>
</evidence>
<evidence type="ECO:0000303" key="15">
    <source>
    </source>
</evidence>
<evidence type="ECO:0000303" key="16">
    <source>
    </source>
</evidence>
<evidence type="ECO:0000303" key="17">
    <source>
    </source>
</evidence>
<evidence type="ECO:0000303" key="18">
    <source>
    </source>
</evidence>
<evidence type="ECO:0000305" key="19"/>
<evidence type="ECO:0007744" key="20">
    <source>
        <dbReference type="PDB" id="2RU8"/>
    </source>
</evidence>
<evidence type="ECO:0007744" key="21">
    <source>
        <dbReference type="PDB" id="4OU6"/>
    </source>
</evidence>
<evidence type="ECO:0007744" key="22">
    <source>
        <dbReference type="PDB" id="4OU7"/>
    </source>
</evidence>
<evidence type="ECO:0007829" key="23">
    <source>
        <dbReference type="PDB" id="4OU6"/>
    </source>
</evidence>
<keyword id="KW-0002">3D-structure</keyword>
<keyword id="KW-0903">Direct protein sequencing</keyword>
<keyword id="KW-0235">DNA replication</keyword>
<keyword id="KW-0238">DNA-binding</keyword>
<keyword id="KW-0639">Primosome</keyword>
<keyword id="KW-1185">Reference proteome</keyword>
<proteinExistence type="evidence at protein level"/>
<feature type="initiator methionine" description="Removed" evidence="8">
    <location>
        <position position="1"/>
    </location>
</feature>
<feature type="chain" id="PRO_0000199869" description="Replication restart protein DnaT">
    <location>
        <begin position="2"/>
        <end position="179"/>
    </location>
</feature>
<feature type="region of interest" description="N-terminus (NT) dissociates a PriB-ssDNA complex, involved in trimerization" evidence="7">
    <location>
        <begin position="1"/>
        <end position="88"/>
    </location>
</feature>
<feature type="region of interest" description="Disordered" evidence="2">
    <location>
        <begin position="156"/>
        <end position="179"/>
    </location>
</feature>
<feature type="binding site" evidence="6">
    <location>
        <position position="124"/>
    </location>
    <ligand>
        <name>ssDNA</name>
        <dbReference type="ChEBI" id="CHEBI:9160"/>
    </ligand>
</feature>
<feature type="binding site" evidence="6">
    <location>
        <position position="127"/>
    </location>
    <ligand>
        <name>ssDNA</name>
        <dbReference type="ChEBI" id="CHEBI:9160"/>
    </ligand>
</feature>
<feature type="binding site" evidence="6">
    <location>
        <position position="128"/>
    </location>
    <ligand>
        <name>ssDNA</name>
        <dbReference type="ChEBI" id="CHEBI:9160"/>
    </ligand>
</feature>
<feature type="binding site" evidence="6">
    <location>
        <position position="133"/>
    </location>
    <ligand>
        <name>ssDNA</name>
        <dbReference type="ChEBI" id="CHEBI:9160"/>
    </ligand>
</feature>
<feature type="binding site" evidence="6 22">
    <location>
        <position position="143"/>
    </location>
    <ligand>
        <name>ssDNA</name>
        <dbReference type="ChEBI" id="CHEBI:9160"/>
    </ligand>
</feature>
<feature type="binding site" evidence="6 22">
    <location>
        <position position="146"/>
    </location>
    <ligand>
        <name>ssDNA</name>
        <dbReference type="ChEBI" id="CHEBI:9160"/>
    </ligand>
</feature>
<feature type="mutagenesis site" description="In the residue 1-88 fragment, strongly decreased dissociation of PriB-ssDNA." evidence="9">
    <original>D</original>
    <variation>A</variation>
    <location>
        <position position="66"/>
    </location>
</feature>
<feature type="mutagenesis site" description="In the residue 1-88 fragment, strongly decreased dissociation of PriB-ssDNA." evidence="7">
    <original>D</original>
    <variation>A</variation>
    <location>
        <position position="70"/>
    </location>
</feature>
<feature type="mutagenesis site" description="In the residue 1-88 fragment, strongly decreased dissociation of PriB-ssDNA." evidence="9">
    <original>Y</original>
    <variation>A</variation>
    <location>
        <position position="74"/>
    </location>
</feature>
<feature type="mutagenesis site" description="In the residue 1-88 fragment, slightly decreased dissociation of PriB-ssDNA." evidence="7">
    <original>E</original>
    <variation>A</variation>
    <location>
        <position position="76"/>
    </location>
</feature>
<feature type="mutagenesis site" description="In dnaT822; phenocopies a priA deletion, some cells are filmentous and partition nucleoids poorly, forms small colonies, has 8-fold increased basal SOS induction, greatly increased sensitivity to UV light." evidence="3">
    <location>
        <begin position="87"/>
        <end position="92"/>
    </location>
</feature>
<feature type="mutagenesis site" description="Loss of ssDNA binding." evidence="6">
    <original>YW</original>
    <variation>AA</variation>
    <location>
        <begin position="127"/>
        <end position="128"/>
    </location>
</feature>
<feature type="mutagenesis site" description="Very low ssDNA binding." evidence="6">
    <original>Y</original>
    <variation>A</variation>
    <location>
        <position position="127"/>
    </location>
</feature>
<feature type="mutagenesis site" description="Very low ssDNA binding." evidence="6">
    <original>W</original>
    <variation>A</variation>
    <location>
        <position position="128"/>
    </location>
</feature>
<feature type="mutagenesis site" description="Loss of ssDNA binding." evidence="6">
    <original>K</original>
    <variation>A</variation>
    <location>
        <position position="133"/>
    </location>
</feature>
<feature type="mutagenesis site" description="Very low ssDNA binding." evidence="6">
    <original>F</original>
    <variation>A</variation>
    <location>
        <position position="135"/>
    </location>
</feature>
<feature type="mutagenesis site" description="Loss of ssDNA binding and PriB-DnaT-ssDNA complex formation, still dissociates PriB-ssDNA." evidence="7">
    <original>HH</original>
    <variation>AA</variation>
    <location>
        <begin position="136"/>
        <end position="137"/>
    </location>
</feature>
<feature type="mutagenesis site" description="Decreased ssDNA binding." evidence="7">
    <original>H</original>
    <variation>A</variation>
    <location>
        <position position="136"/>
    </location>
</feature>
<feature type="mutagenesis site" description="Decreased ssDNA binding." evidence="7">
    <original>H</original>
    <variation>A</variation>
    <location>
        <position position="137"/>
    </location>
</feature>
<feature type="mutagenesis site" description="Loss of ssDNA binding." evidence="6">
    <original>K</original>
    <variation>A</variation>
    <location>
        <position position="143"/>
    </location>
</feature>
<feature type="mutagenesis site" description="Loss of ssDNA binding." evidence="6">
    <original>R</original>
    <variation>A</variation>
    <location>
        <position position="146"/>
    </location>
</feature>
<feature type="sequence conflict" description="In Ref. 1; AA sequence." evidence="19" ref="1">
    <original>E</original>
    <variation>F</variation>
    <location>
        <position position="28"/>
    </location>
</feature>
<feature type="strand" evidence="23">
    <location>
        <begin position="87"/>
        <end position="90"/>
    </location>
</feature>
<feature type="helix" evidence="23">
    <location>
        <begin position="101"/>
        <end position="107"/>
    </location>
</feature>
<feature type="helix" evidence="23">
    <location>
        <begin position="118"/>
        <end position="131"/>
    </location>
</feature>
<feature type="strand" evidence="23">
    <location>
        <begin position="134"/>
        <end position="136"/>
    </location>
</feature>
<feature type="helix" evidence="23">
    <location>
        <begin position="137"/>
        <end position="151"/>
    </location>
</feature>
<feature type="turn" evidence="23">
    <location>
        <begin position="152"/>
        <end position="155"/>
    </location>
</feature>
<organism>
    <name type="scientific">Escherichia coli (strain K12)</name>
    <dbReference type="NCBI Taxonomy" id="83333"/>
    <lineage>
        <taxon>Bacteria</taxon>
        <taxon>Pseudomonadati</taxon>
        <taxon>Pseudomonadota</taxon>
        <taxon>Gammaproteobacteria</taxon>
        <taxon>Enterobacterales</taxon>
        <taxon>Enterobacteriaceae</taxon>
        <taxon>Escherichia</taxon>
    </lineage>
</organism>
<sequence length="179" mass="19455">MSSRVLTPDVVGIDALVHDHQTVLAKAEGGVVAVFANNAPAFYAVTPARLAELLALEEKLARPGSDVALDDQLYQEPQAAPVAVPMGKFAMYPDWQPDADFIRLAALWGVALREPVTTEELASFIAYWQAEGKVFHHVQWQQKLARSLQIGRASNGGLPKRDVNTVSEPDSQIPPGFRG</sequence>
<dbReference type="EMBL" id="J04030">
    <property type="protein sequence ID" value="AAA23699.1"/>
    <property type="molecule type" value="Genomic_DNA"/>
</dbReference>
<dbReference type="EMBL" id="U14003">
    <property type="protein sequence ID" value="AAA97261.1"/>
    <property type="molecule type" value="Genomic_DNA"/>
</dbReference>
<dbReference type="EMBL" id="U00096">
    <property type="protein sequence ID" value="AAC77318.1"/>
    <property type="molecule type" value="Genomic_DNA"/>
</dbReference>
<dbReference type="EMBL" id="AP009048">
    <property type="protein sequence ID" value="BAE78352.1"/>
    <property type="molecule type" value="Genomic_DNA"/>
</dbReference>
<dbReference type="PIR" id="S56589">
    <property type="entry name" value="RMECI"/>
</dbReference>
<dbReference type="RefSeq" id="NP_418782.1">
    <property type="nucleotide sequence ID" value="NC_000913.3"/>
</dbReference>
<dbReference type="RefSeq" id="WP_000098818.1">
    <property type="nucleotide sequence ID" value="NZ_STEB01000025.1"/>
</dbReference>
<dbReference type="PDB" id="2RU8">
    <property type="method" value="NMR"/>
    <property type="chains" value="A=89-179"/>
</dbReference>
<dbReference type="PDB" id="4OU6">
    <property type="method" value="X-ray"/>
    <property type="resolution" value="1.96 A"/>
    <property type="chains" value="A/B/C/D/E=84-159"/>
</dbReference>
<dbReference type="PDB" id="4OU7">
    <property type="method" value="X-ray"/>
    <property type="resolution" value="2.83 A"/>
    <property type="chains" value="A/B/C/D/E=84-154"/>
</dbReference>
<dbReference type="PDBsum" id="2RU8"/>
<dbReference type="PDBsum" id="4OU6"/>
<dbReference type="PDBsum" id="4OU7"/>
<dbReference type="SMR" id="P0A8J2"/>
<dbReference type="BioGRID" id="4262774">
    <property type="interactions" value="123"/>
</dbReference>
<dbReference type="ComplexPortal" id="CPX-1951">
    <property type="entry name" value="Replication restart pre-primosome complex, priAB variant"/>
</dbReference>
<dbReference type="ComplexPortal" id="CPX-1952">
    <property type="entry name" value="Replication restart pre-primosome complex, priAC variant"/>
</dbReference>
<dbReference type="ComplexPortal" id="CPX-5909">
    <property type="entry name" value="Replication restart primosome complex, priAC variant"/>
</dbReference>
<dbReference type="ComplexPortal" id="CPX-5910">
    <property type="entry name" value="Replication restart primosome complex, priAB variant"/>
</dbReference>
<dbReference type="DIP" id="DIP-47957N"/>
<dbReference type="FunCoup" id="P0A8J2">
    <property type="interactions" value="95"/>
</dbReference>
<dbReference type="IntAct" id="P0A8J2">
    <property type="interactions" value="6"/>
</dbReference>
<dbReference type="MINT" id="P0A8J2"/>
<dbReference type="STRING" id="511145.b4362"/>
<dbReference type="jPOST" id="P0A8J2"/>
<dbReference type="PaxDb" id="511145-b4362"/>
<dbReference type="EnsemblBacteria" id="AAC77318">
    <property type="protein sequence ID" value="AAC77318"/>
    <property type="gene ID" value="b4362"/>
</dbReference>
<dbReference type="GeneID" id="93777486"/>
<dbReference type="GeneID" id="948813"/>
<dbReference type="KEGG" id="ecj:JW4326"/>
<dbReference type="KEGG" id="eco:b4362"/>
<dbReference type="KEGG" id="ecoc:C3026_23565"/>
<dbReference type="PATRIC" id="fig|1411691.4.peg.2324"/>
<dbReference type="EchoBASE" id="EB0240"/>
<dbReference type="eggNOG" id="ENOG502Z8PW">
    <property type="taxonomic scope" value="Bacteria"/>
</dbReference>
<dbReference type="HOGENOM" id="CLU_1501592_0_0_6"/>
<dbReference type="InParanoid" id="P0A8J2"/>
<dbReference type="OMA" id="SFVAYWQ"/>
<dbReference type="OrthoDB" id="6630498at2"/>
<dbReference type="PhylomeDB" id="P0A8J2"/>
<dbReference type="BioCyc" id="EcoCyc:EG10244-MONOMER"/>
<dbReference type="BioCyc" id="MetaCyc:EG10244-MONOMER"/>
<dbReference type="EvolutionaryTrace" id="P0A8J2"/>
<dbReference type="PRO" id="PR:P0A8J2"/>
<dbReference type="Proteomes" id="UP000000625">
    <property type="component" value="Chromosome"/>
</dbReference>
<dbReference type="GO" id="GO:1990158">
    <property type="term" value="C:DnaB-DnaC-DnaT-PriA-PriB complex"/>
    <property type="evidence" value="ECO:0000314"/>
    <property type="project" value="EcoCyc"/>
</dbReference>
<dbReference type="GO" id="GO:1990159">
    <property type="term" value="C:DnaB-DnaC-DnaT-PriA-PriC complex"/>
    <property type="evidence" value="ECO:0000303"/>
    <property type="project" value="ComplexPortal"/>
</dbReference>
<dbReference type="GO" id="GO:1990077">
    <property type="term" value="C:primosome complex"/>
    <property type="evidence" value="ECO:0000314"/>
    <property type="project" value="EcoCyc"/>
</dbReference>
<dbReference type="GO" id="GO:0042802">
    <property type="term" value="F:identical protein binding"/>
    <property type="evidence" value="ECO:0000314"/>
    <property type="project" value="EcoCyc"/>
</dbReference>
<dbReference type="GO" id="GO:0000287">
    <property type="term" value="F:magnesium ion binding"/>
    <property type="evidence" value="ECO:0000314"/>
    <property type="project" value="EcoCyc"/>
</dbReference>
<dbReference type="GO" id="GO:0003697">
    <property type="term" value="F:single-stranded DNA binding"/>
    <property type="evidence" value="ECO:0000314"/>
    <property type="project" value="EcoCyc"/>
</dbReference>
<dbReference type="GO" id="GO:0006269">
    <property type="term" value="P:DNA replication, synthesis of primer"/>
    <property type="evidence" value="ECO:0000303"/>
    <property type="project" value="ComplexPortal"/>
</dbReference>
<dbReference type="GO" id="GO:0006261">
    <property type="term" value="P:DNA-templated DNA replication"/>
    <property type="evidence" value="ECO:0000315"/>
    <property type="project" value="EcoCyc"/>
</dbReference>
<dbReference type="GO" id="GO:0070207">
    <property type="term" value="P:protein homotrimerization"/>
    <property type="evidence" value="ECO:0000314"/>
    <property type="project" value="EcoCyc"/>
</dbReference>
<dbReference type="GO" id="GO:0031297">
    <property type="term" value="P:replication fork processing"/>
    <property type="evidence" value="ECO:0000314"/>
    <property type="project" value="EcoCyc"/>
</dbReference>
<dbReference type="FunFam" id="1.10.8.1180:FF:000001">
    <property type="entry name" value="Primosomal protein 1"/>
    <property type="match status" value="1"/>
</dbReference>
<dbReference type="Gene3D" id="1.10.8.1180">
    <property type="match status" value="1"/>
</dbReference>
<dbReference type="HAMAP" id="MF_01061">
    <property type="entry name" value="DnaT"/>
    <property type="match status" value="1"/>
</dbReference>
<dbReference type="InterPro" id="IPR020917">
    <property type="entry name" value="DnaT"/>
</dbReference>
<dbReference type="InterPro" id="IPR040480">
    <property type="entry name" value="DnaT_DNA_bind"/>
</dbReference>
<dbReference type="NCBIfam" id="NF002770">
    <property type="entry name" value="PRK02854.1"/>
    <property type="match status" value="1"/>
</dbReference>
<dbReference type="Pfam" id="PF17948">
    <property type="entry name" value="DnaT"/>
    <property type="match status" value="1"/>
</dbReference>
<accession>P0A8J2</accession>
<accession>P07904</accession>
<accession>Q2M5V4</accession>
<comment type="function">
    <text evidence="3 6 9 12 13 14">Involved in the restart of stalled replication forks, which reloads the DnaB replicative helicase on sites other than the origin of replication (PubMed:8663104, PubMed:8663105, PubMed:8663106). Functions in the PriA-PriB and PriA-PriC restart pathways, but probably not in the PriC-Rep pathway (PubMed:15238512). Displaces ssDNA from a PriB-ssDNA complex (PubMed:25265331, PubMed:30659961). Also involved in inducing stable DNA replication during SOS response. It forms, in concert with DnaC protein and other prepriming proteins DnaB, PriA, PriB and PriC a prepriming protein complex on the specific site of the template DNA recognized by PriA (PubMed:8663104, PubMed:8663105). Binds single-stranded (ss)DNA in a cooperative manner; both the N- and C-terminal domains are required for cooperativity (PubMed:15238512, PubMed:25053836). Forms a spiral filament on ssDNA (PubMed:25053836).</text>
</comment>
<comment type="subunit">
    <text evidence="4 5 6 7 9 10 11 12 13 14">Homooligomerizes; monomer, dimer, trimer, tetramer and pentamer have been seen (PubMed:6453123). Exists in a monomer:trimer equilibrium (PubMed:23418648). During primosome assembly PriA binds to replication forks, subsequently PriB then DnaT bind in a 'hand-off' mechanism, which allows DnaC to load helicase DnaB onto the fork (PubMed:8663104, PubMed:8663105, PubMed:8663106, PubMed:17588514). Component of the replication restart primosome, which is composed of PriA, PriB, PriC, DnaB and DnaT; DnaG primase associates transiently with this complex (PubMed:6454139, PubMed:8663104, PubMed:8663105, PubMed:17588514). Very high levels of DnaT in vitro bypass PriB in primase activity (PubMed:8663106). Weakly binds PriB; binding increases in the presence of ssDNA; as DnaT levels increase PriB dissociates from ssDNA (PubMed:17588514, PubMed:25265331, PubMed:30659961).</text>
</comment>
<comment type="interaction">
    <interactant intactId="EBI-549621">
        <id>P0A8J2</id>
    </interactant>
    <interactant intactId="EBI-549621">
        <id>P0A8J2</id>
        <label>dnaT</label>
    </interactant>
    <organismsDiffer>false</organismsDiffer>
    <experiments>2</experiments>
</comment>
<comment type="interaction">
    <interactant intactId="EBI-549621">
        <id>P0A8J2</id>
    </interactant>
    <interactant intactId="EBI-1125223">
        <id>P07013</id>
        <label>priB</label>
    </interactant>
    <organismsDiffer>false</organismsDiffer>
    <experiments>4</experiments>
</comment>
<comment type="domain">
    <text evidence="5 6 7">The N-terminus (NT, residues 1-88) dissociates PriB from ssDNA, but a smaller region (residues 1-69) does not (PubMed:25265331). The NT is also involved in trimerization (PubMed:23418648, PubMed:25265331). The C-terminus (CT, residues 99-154) is involved in ssDNA binding and forms a 3-helix bundle (PubMed:25265331, PubMed:25053836) with a long flexible tail (residues 155-179) (PubMed:25265331). Both domains are required for cooperative ssDNA-binding (PubMed:25053836). The CT is also involved in trimerization (PubMed:23418648).</text>
</comment>
<comment type="miscellaneous">
    <text evidence="5 10">There are about 50 molecules per cell (PubMed:6453123). At this concentration it should exist in a 3:1 monomer:trimer state (PubMed:23418648).</text>
</comment>
<comment type="similarity">
    <text evidence="1">Belongs to the DnaT family.</text>
</comment>
<name>DNAT_ECOLI</name>
<protein>
    <recommendedName>
        <fullName evidence="1">Replication restart protein DnaT</fullName>
    </recommendedName>
    <alternativeName>
        <fullName evidence="17">Primosomal protein DnaT</fullName>
    </alternativeName>
    <alternativeName>
        <fullName evidence="15 16">Primosomal protein i</fullName>
    </alternativeName>
</protein>
<reference key="1">
    <citation type="journal article" date="1986" name="Proc. Natl. Acad. Sci. U.S.A.">
        <title>Cloning of the Escherichia coli gene for primosomal protein I: the relationship to dnaT, essential for chromosomal DNA replication.</title>
        <authorList>
            <person name="Masai H."/>
            <person name="Bond M.W."/>
            <person name="Arai K."/>
        </authorList>
    </citation>
    <scope>NUCLEOTIDE SEQUENCE [GENOMIC DNA]</scope>
    <scope>PROTEIN SEQUENCE OF 2-41</scope>
</reference>
<reference key="2">
    <citation type="journal article" date="1988" name="J. Biol. Chem.">
        <title>Operon structure of dnaT and dnaC genes essential for normal and stable DNA replication of Escherichia coli chromosome.</title>
        <authorList>
            <person name="Masai H."/>
            <person name="Arai K."/>
        </authorList>
    </citation>
    <scope>NUCLEOTIDE SEQUENCE [GENOMIC DNA]</scope>
    <source>
        <strain>K12</strain>
    </source>
</reference>
<reference key="3">
    <citation type="journal article" date="1995" name="Nucleic Acids Res.">
        <title>Analysis of the Escherichia coli genome VI: DNA sequence of the region from 92.8 through 100 minutes.</title>
        <authorList>
            <person name="Burland V.D."/>
            <person name="Plunkett G. III"/>
            <person name="Sofia H.J."/>
            <person name="Daniels D.L."/>
            <person name="Blattner F.R."/>
        </authorList>
    </citation>
    <scope>NUCLEOTIDE SEQUENCE [LARGE SCALE GENOMIC DNA]</scope>
    <source>
        <strain>K12 / MG1655 / ATCC 47076</strain>
    </source>
</reference>
<reference key="4">
    <citation type="journal article" date="1997" name="Science">
        <title>The complete genome sequence of Escherichia coli K-12.</title>
        <authorList>
            <person name="Blattner F.R."/>
            <person name="Plunkett G. III"/>
            <person name="Bloch C.A."/>
            <person name="Perna N.T."/>
            <person name="Burland V."/>
            <person name="Riley M."/>
            <person name="Collado-Vides J."/>
            <person name="Glasner J.D."/>
            <person name="Rode C.K."/>
            <person name="Mayhew G.F."/>
            <person name="Gregor J."/>
            <person name="Davis N.W."/>
            <person name="Kirkpatrick H.A."/>
            <person name="Goeden M.A."/>
            <person name="Rose D.J."/>
            <person name="Mau B."/>
            <person name="Shao Y."/>
        </authorList>
    </citation>
    <scope>NUCLEOTIDE SEQUENCE [LARGE SCALE GENOMIC DNA]</scope>
    <source>
        <strain>K12 / MG1655 / ATCC 47076</strain>
    </source>
</reference>
<reference key="5">
    <citation type="journal article" date="2006" name="Mol. Syst. Biol.">
        <title>Highly accurate genome sequences of Escherichia coli K-12 strains MG1655 and W3110.</title>
        <authorList>
            <person name="Hayashi K."/>
            <person name="Morooka N."/>
            <person name="Yamamoto Y."/>
            <person name="Fujita K."/>
            <person name="Isono K."/>
            <person name="Choi S."/>
            <person name="Ohtsubo E."/>
            <person name="Baba T."/>
            <person name="Wanner B.L."/>
            <person name="Mori H."/>
            <person name="Horiuchi T."/>
        </authorList>
    </citation>
    <scope>NUCLEOTIDE SEQUENCE [LARGE SCALE GENOMIC DNA]</scope>
    <source>
        <strain>K12 / W3110 / ATCC 27325 / DSM 5911</strain>
    </source>
</reference>
<reference key="6">
    <citation type="journal article" date="1987" name="J. Biol. Chem.">
        <title>Structure of Escherichia coli dnaC. Identification of a cysteine residue possibly involved in association with dnaB protein.</title>
        <authorList>
            <person name="Nakayama N."/>
            <person name="Bond M.W."/>
            <person name="Miyajima A."/>
            <person name="Kobori J."/>
            <person name="Arai K."/>
        </authorList>
    </citation>
    <scope>NUCLEOTIDE SEQUENCE [GENOMIC DNA] OF 108-179</scope>
</reference>
<reference key="7">
    <citation type="journal article" date="1981" name="Proc. Natl. Acad. Sci. U.S.A.">
        <title>Unique primed start of phage phi X174 DNA replication and mobility of the primosome in a direction opposite chain synthesis.</title>
        <authorList>
            <person name="Arai K."/>
            <person name="Kornberg A."/>
        </authorList>
    </citation>
    <scope>PRIMOSOME SUBUNITS</scope>
</reference>
<reference key="8">
    <citation type="journal article" date="1981" name="J. Biol. Chem.">
        <title>Purification and properties of Escherichia coli protein i, a prepriming protein in phi X174 DNA replication.</title>
        <authorList>
            <person name="Arai K."/>
            <person name="McMacken R."/>
            <person name="Yasuda S."/>
            <person name="Kornberg A."/>
        </authorList>
    </citation>
    <scope>PROTEIN ABUNDANCE</scope>
    <scope>SUBUNIT</scope>
    <source>
        <strain>K12 / HMS83</strain>
    </source>
</reference>
<reference key="9">
    <citation type="journal article" date="1996" name="J. Biol. Chem.">
        <title>The ordered assembly of the phiX174-type primosome. I. Isolation and identification of intermediate protein-DNA complexes.</title>
        <authorList>
            <person name="Ng J.Y."/>
            <person name="Marians K.J."/>
        </authorList>
    </citation>
    <scope>PRIMOSOME COMPLEX ASSEMBLY</scope>
    <scope>SUBUNIT</scope>
</reference>
<reference key="10">
    <citation type="journal article" date="1996" name="J. Biol. Chem.">
        <title>The ordered assembly of the phiX174-type primosome. II. Preservation of primosome composition from assembly through replication.</title>
        <authorList>
            <person name="Ng J.Y."/>
            <person name="Marians K.J."/>
        </authorList>
    </citation>
    <scope>PRIMOSOME COMPLEX ASSEMBLY</scope>
    <scope>SUBUNIT</scope>
</reference>
<reference key="11">
    <citation type="journal article" date="1996" name="J. Biol. Chem.">
        <title>The ordered assembly of the phiX174-type primosome. III. PriB facilitates complex formation between PriA and DnaT.</title>
        <authorList>
            <person name="Liu J."/>
            <person name="Nurse P."/>
            <person name="Marians K.J."/>
        </authorList>
    </citation>
    <scope>FUNCTION</scope>
    <scope>SUBUNIT</scope>
    <scope>PRIMOSOME COMPLEX ASSEMBLY</scope>
</reference>
<reference key="12">
    <citation type="journal article" date="1997" name="Electrophoresis">
        <title>Escherichia coli proteome analysis using the gene-protein database.</title>
        <authorList>
            <person name="VanBogelen R.A."/>
            <person name="Abshire K.Z."/>
            <person name="Moldover B."/>
            <person name="Olson E.R."/>
            <person name="Neidhardt F.C."/>
        </authorList>
    </citation>
    <scope>IDENTIFICATION BY 2D-GEL</scope>
</reference>
<reference key="13">
    <citation type="journal article" date="2004" name="Genetics">
        <title>A dnaT mutant with phenotypes similar to those of a priA2::kan mutant in Escherichia coli K-12.</title>
        <authorList>
            <person name="McCool J.D."/>
            <person name="Ford C.C."/>
            <person name="Sandler S.J."/>
        </authorList>
    </citation>
    <scope>FUNCTION</scope>
    <scope>MUTAGENESIS OF 87-GLY--TYR-92</scope>
    <source>
        <strain>K12 / DM4000</strain>
    </source>
</reference>
<reference key="14">
    <citation type="journal article" date="2007" name="Mol. Cell">
        <title>A hand-off mechanism for primosome assembly in replication restart.</title>
        <authorList>
            <person name="Lopper M."/>
            <person name="Boonsombat R."/>
            <person name="Sandler S.J."/>
            <person name="Keck J.L."/>
        </authorList>
    </citation>
    <scope>SUBUNIT</scope>
    <scope>INTERACTION WITH PRIB</scope>
</reference>
<reference key="15">
    <citation type="journal article" date="2013" name="Biochemistry">
        <title>The Escherichia coli primosomal DnaT protein exists in solution as a monomer-trimer equilibrium system.</title>
        <authorList>
            <person name="Szymanski M.R."/>
            <person name="Jezewska M.J."/>
            <person name="Bujalowski W."/>
        </authorList>
    </citation>
    <scope>SUBUNIT</scope>
    <scope>DOMAIN</scope>
</reference>
<reference key="16">
    <citation type="journal article" date="2019" name="Biochim. Biophys. Acta">
        <title>Insight into the interaction between PriB and DnaT on bacterial DNA replication restart: Significance of the residues on PriB dimer interface and highly acidic region on DnaT.</title>
        <authorList>
            <person name="Fujiyama S."/>
            <person name="Abe Y."/>
            <person name="Shiroishi M."/>
            <person name="Ikeda Y."/>
            <person name="Ueda T."/>
        </authorList>
    </citation>
    <scope>FUNCTION</scope>
    <scope>SUBUNIT</scope>
    <scope>INTERACTION WITH PRIB</scope>
    <scope>MUTAGENESIS OF ASP-66 AND TYR-74</scope>
</reference>
<reference evidence="20" key="17">
    <citation type="journal article" date="2014" name="FEBS J.">
        <title>Structure and mechanism of the primosome protein DnaT-functional structures for homotrimerization, dissociation of ssDNA from the PriB.ssDNA complex, and formation of the DnaT.ssDNA complex.</title>
        <authorList>
            <person name="Fujiyama S."/>
            <person name="Abe Y."/>
            <person name="Tani J."/>
            <person name="Urabe M."/>
            <person name="Sato K."/>
            <person name="Aramaki T."/>
            <person name="Katayama T."/>
            <person name="Ueda T."/>
        </authorList>
    </citation>
    <scope>STRUCTURE BY NMR OF 89-179</scope>
    <scope>FUNCTION</scope>
    <scope>SUBUNIT</scope>
    <scope>DOMAIN</scope>
    <scope>DNA-BINDING</scope>
    <scope>MUTAGENESIS OF ASP-70; GLU-76; 136-HIS-HIS-137; HIS-136 AND HIS-137</scope>
</reference>
<reference evidence="21 22" key="18">
    <citation type="journal article" date="2014" name="Nucleic Acids Res.">
        <title>Crystal structure of DnaT84-153-dT10 ssDNA complex reveals a novel single-stranded DNA binding mode.</title>
        <authorList>
            <person name="Liu Z."/>
            <person name="Chen P."/>
            <person name="Wang X."/>
            <person name="Cai G."/>
            <person name="Niu L."/>
            <person name="Teng M."/>
            <person name="Li X."/>
        </authorList>
    </citation>
    <scope>X-RAY CRYSTALLOGRAPHY (1.96 ANGSTROMS) OF 84-159</scope>
    <scope>X-RAY CRYSTALLOGRAPHY (2.83 ANGSTROMS) OF 84-154 IN COMPLEX WITH DNA</scope>
    <scope>FUNCTION</scope>
    <scope>SUBUNIT</scope>
    <scope>DOMAIN</scope>
    <scope>DNA-BINDING</scope>
    <scope>MUTAGENESIS OF 127-TYR-TRP-128; TYR-127; TRP-128; LYS-133; PHE-135; LYS-143 AND ARG-146</scope>
    <source>
        <strain>K12</strain>
    </source>
</reference>